<organism>
    <name type="scientific">Pseudomonas putida (strain W619)</name>
    <dbReference type="NCBI Taxonomy" id="390235"/>
    <lineage>
        <taxon>Bacteria</taxon>
        <taxon>Pseudomonadati</taxon>
        <taxon>Pseudomonadota</taxon>
        <taxon>Gammaproteobacteria</taxon>
        <taxon>Pseudomonadales</taxon>
        <taxon>Pseudomonadaceae</taxon>
        <taxon>Pseudomonas</taxon>
    </lineage>
</organism>
<gene>
    <name type="ordered locus">PputW619_5092</name>
</gene>
<comment type="subcellular location">
    <subcellularLocation>
        <location evidence="1">Cell membrane</location>
        <topology evidence="1">Multi-pass membrane protein</topology>
    </subcellularLocation>
</comment>
<comment type="similarity">
    <text evidence="1">Belongs to the UPF0391 family.</text>
</comment>
<keyword id="KW-1003">Cell membrane</keyword>
<keyword id="KW-0472">Membrane</keyword>
<keyword id="KW-0812">Transmembrane</keyword>
<keyword id="KW-1133">Transmembrane helix</keyword>
<reference key="1">
    <citation type="submission" date="2008-02" db="EMBL/GenBank/DDBJ databases">
        <title>Complete sequence of Pseudomonas putida W619.</title>
        <authorList>
            <person name="Copeland A."/>
            <person name="Lucas S."/>
            <person name="Lapidus A."/>
            <person name="Barry K."/>
            <person name="Detter J.C."/>
            <person name="Glavina del Rio T."/>
            <person name="Dalin E."/>
            <person name="Tice H."/>
            <person name="Pitluck S."/>
            <person name="Chain P."/>
            <person name="Malfatti S."/>
            <person name="Shin M."/>
            <person name="Vergez L."/>
            <person name="Schmutz J."/>
            <person name="Larimer F."/>
            <person name="Land M."/>
            <person name="Hauser L."/>
            <person name="Kyrpides N."/>
            <person name="Kim E."/>
            <person name="Taghavi S."/>
            <person name="Vangronsveld D."/>
            <person name="van der Lelie D."/>
            <person name="Richardson P."/>
        </authorList>
    </citation>
    <scope>NUCLEOTIDE SEQUENCE [LARGE SCALE GENOMIC DNA]</scope>
    <source>
        <strain>W619</strain>
    </source>
</reference>
<proteinExistence type="inferred from homology"/>
<dbReference type="EMBL" id="CP000949">
    <property type="protein sequence ID" value="ACA75568.1"/>
    <property type="molecule type" value="Genomic_DNA"/>
</dbReference>
<dbReference type="STRING" id="390235.PputW619_5092"/>
<dbReference type="KEGG" id="ppw:PputW619_5092"/>
<dbReference type="eggNOG" id="COG5487">
    <property type="taxonomic scope" value="Bacteria"/>
</dbReference>
<dbReference type="HOGENOM" id="CLU_187346_2_1_6"/>
<dbReference type="GO" id="GO:0005886">
    <property type="term" value="C:plasma membrane"/>
    <property type="evidence" value="ECO:0007669"/>
    <property type="project" value="UniProtKB-SubCell"/>
</dbReference>
<dbReference type="HAMAP" id="MF_01361">
    <property type="entry name" value="UPF0391"/>
    <property type="match status" value="1"/>
</dbReference>
<dbReference type="InterPro" id="IPR009760">
    <property type="entry name" value="DUF1328"/>
</dbReference>
<dbReference type="NCBIfam" id="NF010226">
    <property type="entry name" value="PRK13682.1-1"/>
    <property type="match status" value="1"/>
</dbReference>
<dbReference type="NCBIfam" id="NF010229">
    <property type="entry name" value="PRK13682.1-4"/>
    <property type="match status" value="1"/>
</dbReference>
<dbReference type="Pfam" id="PF07043">
    <property type="entry name" value="DUF1328"/>
    <property type="match status" value="1"/>
</dbReference>
<dbReference type="PIRSF" id="PIRSF036466">
    <property type="entry name" value="UCP036466"/>
    <property type="match status" value="1"/>
</dbReference>
<evidence type="ECO:0000255" key="1">
    <source>
        <dbReference type="HAMAP-Rule" id="MF_01361"/>
    </source>
</evidence>
<protein>
    <recommendedName>
        <fullName evidence="1">UPF0391 membrane protein PputW619_5092</fullName>
    </recommendedName>
</protein>
<feature type="chain" id="PRO_1000143718" description="UPF0391 membrane protein PputW619_5092">
    <location>
        <begin position="1"/>
        <end position="53"/>
    </location>
</feature>
<feature type="transmembrane region" description="Helical" evidence="1">
    <location>
        <begin position="4"/>
        <end position="24"/>
    </location>
</feature>
<feature type="transmembrane region" description="Helical" evidence="1">
    <location>
        <begin position="29"/>
        <end position="49"/>
    </location>
</feature>
<name>Y5092_PSEPW</name>
<sequence>MLSWAITFLIIAIVAAVLGFGGIAGAATGIAKILFIVFLVLFVASFFFGRGRG</sequence>
<accession>B1JFI1</accession>